<proteinExistence type="evidence at protein level"/>
<reference key="1">
    <citation type="journal article" date="2001" name="Mol. Cell. Biol.">
        <title>The CELF family of RNA binding proteins is implicated in cell-specific and developmentally regulated alternative splicing.</title>
        <authorList>
            <person name="Ladd A.N."/>
            <person name="Charlet-B N."/>
            <person name="Cooper T.A."/>
        </authorList>
    </citation>
    <scope>NUCLEOTIDE SEQUENCE [MRNA] (ISOFORM 1)</scope>
    <scope>FUNCTION</scope>
    <scope>RNA-BINDING</scope>
    <scope>TISSUE SPECIFICITY</scope>
    <scope>POLYMORPHISM</scope>
    <source>
        <tissue>Brain</tissue>
    </source>
</reference>
<reference key="2">
    <citation type="submission" date="2002-10" db="EMBL/GenBank/DDBJ databases">
        <title>The RNA binding protein CELF3 associates to the DMPK mRNA and is a negative regulator of mRNA stability involved in neuronal differentiation.</title>
        <authorList>
            <person name="d'Apolito M."/>
            <person name="Savino M."/>
            <person name="Grifa A."/>
            <person name="Quattrone A."/>
        </authorList>
    </citation>
    <scope>NUCLEOTIDE SEQUENCE [MRNA] (ISOFORM 1)</scope>
    <source>
        <tissue>Brain</tissue>
    </source>
</reference>
<reference key="3">
    <citation type="journal article" date="2006" name="Nature">
        <title>The DNA sequence and biological annotation of human chromosome 1.</title>
        <authorList>
            <person name="Gregory S.G."/>
            <person name="Barlow K.F."/>
            <person name="McLay K.E."/>
            <person name="Kaul R."/>
            <person name="Swarbreck D."/>
            <person name="Dunham A."/>
            <person name="Scott C.E."/>
            <person name="Howe K.L."/>
            <person name="Woodfine K."/>
            <person name="Spencer C.C.A."/>
            <person name="Jones M.C."/>
            <person name="Gillson C."/>
            <person name="Searle S."/>
            <person name="Zhou Y."/>
            <person name="Kokocinski F."/>
            <person name="McDonald L."/>
            <person name="Evans R."/>
            <person name="Phillips K."/>
            <person name="Atkinson A."/>
            <person name="Cooper R."/>
            <person name="Jones C."/>
            <person name="Hall R.E."/>
            <person name="Andrews T.D."/>
            <person name="Lloyd C."/>
            <person name="Ainscough R."/>
            <person name="Almeida J.P."/>
            <person name="Ambrose K.D."/>
            <person name="Anderson F."/>
            <person name="Andrew R.W."/>
            <person name="Ashwell R.I.S."/>
            <person name="Aubin K."/>
            <person name="Babbage A.K."/>
            <person name="Bagguley C.L."/>
            <person name="Bailey J."/>
            <person name="Beasley H."/>
            <person name="Bethel G."/>
            <person name="Bird C.P."/>
            <person name="Bray-Allen S."/>
            <person name="Brown J.Y."/>
            <person name="Brown A.J."/>
            <person name="Buckley D."/>
            <person name="Burton J."/>
            <person name="Bye J."/>
            <person name="Carder C."/>
            <person name="Chapman J.C."/>
            <person name="Clark S.Y."/>
            <person name="Clarke G."/>
            <person name="Clee C."/>
            <person name="Cobley V."/>
            <person name="Collier R.E."/>
            <person name="Corby N."/>
            <person name="Coville G.J."/>
            <person name="Davies J."/>
            <person name="Deadman R."/>
            <person name="Dunn M."/>
            <person name="Earthrowl M."/>
            <person name="Ellington A.G."/>
            <person name="Errington H."/>
            <person name="Frankish A."/>
            <person name="Frankland J."/>
            <person name="French L."/>
            <person name="Garner P."/>
            <person name="Garnett J."/>
            <person name="Gay L."/>
            <person name="Ghori M.R.J."/>
            <person name="Gibson R."/>
            <person name="Gilby L.M."/>
            <person name="Gillett W."/>
            <person name="Glithero R.J."/>
            <person name="Grafham D.V."/>
            <person name="Griffiths C."/>
            <person name="Griffiths-Jones S."/>
            <person name="Grocock R."/>
            <person name="Hammond S."/>
            <person name="Harrison E.S.I."/>
            <person name="Hart E."/>
            <person name="Haugen E."/>
            <person name="Heath P.D."/>
            <person name="Holmes S."/>
            <person name="Holt K."/>
            <person name="Howden P.J."/>
            <person name="Hunt A.R."/>
            <person name="Hunt S.E."/>
            <person name="Hunter G."/>
            <person name="Isherwood J."/>
            <person name="James R."/>
            <person name="Johnson C."/>
            <person name="Johnson D."/>
            <person name="Joy A."/>
            <person name="Kay M."/>
            <person name="Kershaw J.K."/>
            <person name="Kibukawa M."/>
            <person name="Kimberley A.M."/>
            <person name="King A."/>
            <person name="Knights A.J."/>
            <person name="Lad H."/>
            <person name="Laird G."/>
            <person name="Lawlor S."/>
            <person name="Leongamornlert D.A."/>
            <person name="Lloyd D.M."/>
            <person name="Loveland J."/>
            <person name="Lovell J."/>
            <person name="Lush M.J."/>
            <person name="Lyne R."/>
            <person name="Martin S."/>
            <person name="Mashreghi-Mohammadi M."/>
            <person name="Matthews L."/>
            <person name="Matthews N.S.W."/>
            <person name="McLaren S."/>
            <person name="Milne S."/>
            <person name="Mistry S."/>
            <person name="Moore M.J.F."/>
            <person name="Nickerson T."/>
            <person name="O'Dell C.N."/>
            <person name="Oliver K."/>
            <person name="Palmeiri A."/>
            <person name="Palmer S.A."/>
            <person name="Parker A."/>
            <person name="Patel D."/>
            <person name="Pearce A.V."/>
            <person name="Peck A.I."/>
            <person name="Pelan S."/>
            <person name="Phelps K."/>
            <person name="Phillimore B.J."/>
            <person name="Plumb R."/>
            <person name="Rajan J."/>
            <person name="Raymond C."/>
            <person name="Rouse G."/>
            <person name="Saenphimmachak C."/>
            <person name="Sehra H.K."/>
            <person name="Sheridan E."/>
            <person name="Shownkeen R."/>
            <person name="Sims S."/>
            <person name="Skuce C.D."/>
            <person name="Smith M."/>
            <person name="Steward C."/>
            <person name="Subramanian S."/>
            <person name="Sycamore N."/>
            <person name="Tracey A."/>
            <person name="Tromans A."/>
            <person name="Van Helmond Z."/>
            <person name="Wall M."/>
            <person name="Wallis J.M."/>
            <person name="White S."/>
            <person name="Whitehead S.L."/>
            <person name="Wilkinson J.E."/>
            <person name="Willey D.L."/>
            <person name="Williams H."/>
            <person name="Wilming L."/>
            <person name="Wray P.W."/>
            <person name="Wu Z."/>
            <person name="Coulson A."/>
            <person name="Vaudin M."/>
            <person name="Sulston J.E."/>
            <person name="Durbin R.M."/>
            <person name="Hubbard T."/>
            <person name="Wooster R."/>
            <person name="Dunham I."/>
            <person name="Carter N.P."/>
            <person name="McVean G."/>
            <person name="Ross M.T."/>
            <person name="Harrow J."/>
            <person name="Olson M.V."/>
            <person name="Beck S."/>
            <person name="Rogers J."/>
            <person name="Bentley D.R."/>
        </authorList>
    </citation>
    <scope>NUCLEOTIDE SEQUENCE [LARGE SCALE GENOMIC DNA]</scope>
</reference>
<reference key="4">
    <citation type="submission" date="2005-07" db="EMBL/GenBank/DDBJ databases">
        <authorList>
            <person name="Mural R.J."/>
            <person name="Istrail S."/>
            <person name="Sutton G.G."/>
            <person name="Florea L."/>
            <person name="Halpern A.L."/>
            <person name="Mobarry C.M."/>
            <person name="Lippert R."/>
            <person name="Walenz B."/>
            <person name="Shatkay H."/>
            <person name="Dew I."/>
            <person name="Miller J.R."/>
            <person name="Flanigan M.J."/>
            <person name="Edwards N.J."/>
            <person name="Bolanos R."/>
            <person name="Fasulo D."/>
            <person name="Halldorsson B.V."/>
            <person name="Hannenhalli S."/>
            <person name="Turner R."/>
            <person name="Yooseph S."/>
            <person name="Lu F."/>
            <person name="Nusskern D.R."/>
            <person name="Shue B.C."/>
            <person name="Zheng X.H."/>
            <person name="Zhong F."/>
            <person name="Delcher A.L."/>
            <person name="Huson D.H."/>
            <person name="Kravitz S.A."/>
            <person name="Mouchard L."/>
            <person name="Reinert K."/>
            <person name="Remington K.A."/>
            <person name="Clark A.G."/>
            <person name="Waterman M.S."/>
            <person name="Eichler E.E."/>
            <person name="Adams M.D."/>
            <person name="Hunkapiller M.W."/>
            <person name="Myers E.W."/>
            <person name="Venter J.C."/>
        </authorList>
    </citation>
    <scope>NUCLEOTIDE SEQUENCE [LARGE SCALE GENOMIC DNA]</scope>
</reference>
<reference key="5">
    <citation type="journal article" date="2004" name="Genome Res.">
        <title>The status, quality, and expansion of the NIH full-length cDNA project: the Mammalian Gene Collection (MGC).</title>
        <authorList>
            <consortium name="The MGC Project Team"/>
        </authorList>
    </citation>
    <scope>NUCLEOTIDE SEQUENCE [LARGE SCALE MRNA] (ISOFORMS 1; 2 AND 3)</scope>
    <source>
        <tissue>Brain</tissue>
        <tissue>Retinoblastoma</tissue>
    </source>
</reference>
<reference key="6">
    <citation type="journal article" date="1997" name="Hum. Genet.">
        <title>cDNAs with long CAG trinucleotide repeats from human brain.</title>
        <authorList>
            <person name="Margolis R.L."/>
            <person name="Abraham M.R."/>
            <person name="Gatchell S.B."/>
            <person name="Li S.-H."/>
            <person name="Kidwai A.S."/>
            <person name="Breschel T.S."/>
            <person name="Stine O.C."/>
            <person name="Callahan C."/>
            <person name="McInnis M.G."/>
            <person name="Ross C.A."/>
        </authorList>
    </citation>
    <scope>NUCLEOTIDE SEQUENCE [MRNA] OF 109-465 (ISOFORM 1)</scope>
    <source>
        <tissue>Fetal brain</tissue>
    </source>
</reference>
<reference key="7">
    <citation type="journal article" date="2000" name="J. Biol. Chem.">
        <title>A family of human RNA-binding proteins related to the Drosophila Bruno translational regulator.</title>
        <authorList>
            <person name="Good P.J."/>
            <person name="Chen Q."/>
            <person name="Warner S.J."/>
            <person name="Herring D.C."/>
        </authorList>
    </citation>
    <scope>NUCLEOTIDE SEQUENCE [MRNA] OF 326-465</scope>
</reference>
<reference key="8">
    <citation type="journal article" date="2004" name="J. Neurochem.">
        <title>Tau exon 10, whose missplicing causes frontotemporal dementia, is regulated by an intricate interplay of cis elements and trans factors.</title>
        <authorList>
            <person name="Wang J."/>
            <person name="Gao Q.S."/>
            <person name="Wang Y."/>
            <person name="Lafyatis R."/>
            <person name="Stamm S."/>
            <person name="Andreadis A."/>
        </authorList>
    </citation>
    <scope>FUNCTION</scope>
</reference>
<reference key="9">
    <citation type="submission" date="2006-10" db="PDB data bank">
        <title>Solution structure of RNA binding domain in trinucleotide repeat containing 4 variant.</title>
        <authorList>
            <consortium name="RIKEN structural genomics initiative (RSGI)"/>
        </authorList>
    </citation>
    <scope>STRUCTURE BY NMR OF 90-178</scope>
</reference>
<dbReference type="EMBL" id="AF329264">
    <property type="protein sequence ID" value="AAK07474.1"/>
    <property type="molecule type" value="mRNA"/>
</dbReference>
<dbReference type="EMBL" id="AY165003">
    <property type="protein sequence ID" value="AAN73884.1"/>
    <property type="molecule type" value="mRNA"/>
</dbReference>
<dbReference type="EMBL" id="AL589765">
    <property type="status" value="NOT_ANNOTATED_CDS"/>
    <property type="molecule type" value="Genomic_DNA"/>
</dbReference>
<dbReference type="EMBL" id="CH471121">
    <property type="protein sequence ID" value="EAW53422.1"/>
    <property type="molecule type" value="Genomic_DNA"/>
</dbReference>
<dbReference type="EMBL" id="BC052491">
    <property type="protein sequence ID" value="AAH52491.1"/>
    <property type="molecule type" value="mRNA"/>
</dbReference>
<dbReference type="EMBL" id="BC068008">
    <property type="protein sequence ID" value="AAH68008.1"/>
    <property type="molecule type" value="mRNA"/>
</dbReference>
<dbReference type="EMBL" id="BC104758">
    <property type="protein sequence ID" value="AAI04759.1"/>
    <property type="molecule type" value="mRNA"/>
</dbReference>
<dbReference type="EMBL" id="BC143226">
    <property type="protein sequence ID" value="AAI43227.1"/>
    <property type="molecule type" value="mRNA"/>
</dbReference>
<dbReference type="EMBL" id="U80746">
    <property type="protein sequence ID" value="AAB91444.1"/>
    <property type="status" value="ALT_FRAME"/>
    <property type="molecule type" value="mRNA"/>
</dbReference>
<dbReference type="EMBL" id="AF284423">
    <property type="protein sequence ID" value="AAG14457.1"/>
    <property type="molecule type" value="mRNA"/>
</dbReference>
<dbReference type="CCDS" id="CCDS1002.1">
    <molecule id="Q5SZQ8-1"/>
</dbReference>
<dbReference type="CCDS" id="CCDS53367.1">
    <molecule id="Q5SZQ8-4"/>
</dbReference>
<dbReference type="RefSeq" id="NP_001166120.1">
    <molecule id="Q5SZQ8-4"/>
    <property type="nucleotide sequence ID" value="NM_001172649.4"/>
</dbReference>
<dbReference type="RefSeq" id="NP_001278035.1">
    <molecule id="Q5SZQ8-2"/>
    <property type="nucleotide sequence ID" value="NM_001291106.2"/>
</dbReference>
<dbReference type="RefSeq" id="NP_001278036.1">
    <molecule id="Q5SZQ8-3"/>
    <property type="nucleotide sequence ID" value="NM_001291107.2"/>
</dbReference>
<dbReference type="RefSeq" id="NP_009116.3">
    <molecule id="Q5SZQ8-1"/>
    <property type="nucleotide sequence ID" value="NM_007185.6"/>
</dbReference>
<dbReference type="PDB" id="2DNO">
    <property type="method" value="NMR"/>
    <property type="chains" value="A=90-178"/>
</dbReference>
<dbReference type="PDBsum" id="2DNO"/>
<dbReference type="SMR" id="Q5SZQ8"/>
<dbReference type="BioGRID" id="116359">
    <property type="interactions" value="12"/>
</dbReference>
<dbReference type="FunCoup" id="Q5SZQ8">
    <property type="interactions" value="714"/>
</dbReference>
<dbReference type="IntAct" id="Q5SZQ8">
    <property type="interactions" value="8"/>
</dbReference>
<dbReference type="MINT" id="Q5SZQ8"/>
<dbReference type="STRING" id="9606.ENSP00000290583"/>
<dbReference type="GlyGen" id="Q5SZQ8">
    <property type="glycosylation" value="1 site"/>
</dbReference>
<dbReference type="iPTMnet" id="Q5SZQ8"/>
<dbReference type="PhosphoSitePlus" id="Q5SZQ8"/>
<dbReference type="BioMuta" id="CELF3"/>
<dbReference type="DMDM" id="74756184"/>
<dbReference type="jPOST" id="Q5SZQ8"/>
<dbReference type="MassIVE" id="Q5SZQ8"/>
<dbReference type="PaxDb" id="9606-ENSP00000290583"/>
<dbReference type="PeptideAtlas" id="Q5SZQ8"/>
<dbReference type="ProteomicsDB" id="64095"/>
<dbReference type="ProteomicsDB" id="64096">
    <molecule id="Q5SZQ8-1"/>
</dbReference>
<dbReference type="ProteomicsDB" id="64097">
    <molecule id="Q5SZQ8-2"/>
</dbReference>
<dbReference type="ProteomicsDB" id="64098">
    <molecule id="Q5SZQ8-3"/>
</dbReference>
<dbReference type="Antibodypedia" id="20334">
    <property type="antibodies" value="91 antibodies from 21 providers"/>
</dbReference>
<dbReference type="DNASU" id="11189"/>
<dbReference type="Ensembl" id="ENST00000290583.9">
    <molecule id="Q5SZQ8-1"/>
    <property type="protein sequence ID" value="ENSP00000290583.4"/>
    <property type="gene ID" value="ENSG00000159409.15"/>
</dbReference>
<dbReference type="Ensembl" id="ENST00000290585.8">
    <molecule id="Q5SZQ8-4"/>
    <property type="protein sequence ID" value="ENSP00000290585.4"/>
    <property type="gene ID" value="ENSG00000159409.15"/>
</dbReference>
<dbReference type="GeneID" id="11189"/>
<dbReference type="KEGG" id="hsa:11189"/>
<dbReference type="MANE-Select" id="ENST00000290583.9">
    <property type="protein sequence ID" value="ENSP00000290583.4"/>
    <property type="RefSeq nucleotide sequence ID" value="NM_007185.7"/>
    <property type="RefSeq protein sequence ID" value="NP_009116.3"/>
</dbReference>
<dbReference type="UCSC" id="uc001eys.3">
    <molecule id="Q5SZQ8-1"/>
    <property type="organism name" value="human"/>
</dbReference>
<dbReference type="AGR" id="HGNC:11967"/>
<dbReference type="CTD" id="11189"/>
<dbReference type="DisGeNET" id="11189"/>
<dbReference type="GeneCards" id="CELF3"/>
<dbReference type="HGNC" id="HGNC:11967">
    <property type="gene designation" value="CELF3"/>
</dbReference>
<dbReference type="HPA" id="ENSG00000159409">
    <property type="expression patterns" value="Group enriched (brain, pituitary gland)"/>
</dbReference>
<dbReference type="MIM" id="612678">
    <property type="type" value="gene"/>
</dbReference>
<dbReference type="neXtProt" id="NX_Q5SZQ8"/>
<dbReference type="OpenTargets" id="ENSG00000159409"/>
<dbReference type="PharmGKB" id="PA36654"/>
<dbReference type="VEuPathDB" id="HostDB:ENSG00000159409"/>
<dbReference type="eggNOG" id="KOG0146">
    <property type="taxonomic scope" value="Eukaryota"/>
</dbReference>
<dbReference type="GeneTree" id="ENSGT00940000154716"/>
<dbReference type="HOGENOM" id="CLU_015367_0_1_1"/>
<dbReference type="InParanoid" id="Q5SZQ8"/>
<dbReference type="OMA" id="SPMTLNY"/>
<dbReference type="OrthoDB" id="410044at2759"/>
<dbReference type="PAN-GO" id="Q5SZQ8">
    <property type="GO annotations" value="6 GO annotations based on evolutionary models"/>
</dbReference>
<dbReference type="PhylomeDB" id="Q5SZQ8"/>
<dbReference type="TreeFam" id="TF314924"/>
<dbReference type="PathwayCommons" id="Q5SZQ8"/>
<dbReference type="SignaLink" id="Q5SZQ8"/>
<dbReference type="BioGRID-ORCS" id="11189">
    <property type="hits" value="15 hits in 1145 CRISPR screens"/>
</dbReference>
<dbReference type="CD-CODE" id="DEE660B4">
    <property type="entry name" value="Stress granule"/>
</dbReference>
<dbReference type="ChiTaRS" id="CELF3">
    <property type="organism name" value="human"/>
</dbReference>
<dbReference type="EvolutionaryTrace" id="Q5SZQ8"/>
<dbReference type="GenomeRNAi" id="11189"/>
<dbReference type="Pharos" id="Q5SZQ8">
    <property type="development level" value="Tbio"/>
</dbReference>
<dbReference type="PRO" id="PR:Q5SZQ8"/>
<dbReference type="Proteomes" id="UP000005640">
    <property type="component" value="Chromosome 1"/>
</dbReference>
<dbReference type="RNAct" id="Q5SZQ8">
    <property type="molecule type" value="protein"/>
</dbReference>
<dbReference type="Bgee" id="ENSG00000159409">
    <property type="expression patterns" value="Expressed in cortical plate and 139 other cell types or tissues"/>
</dbReference>
<dbReference type="ExpressionAtlas" id="Q5SZQ8">
    <property type="expression patterns" value="baseline and differential"/>
</dbReference>
<dbReference type="GO" id="GO:0005737">
    <property type="term" value="C:cytoplasm"/>
    <property type="evidence" value="ECO:0000314"/>
    <property type="project" value="UniProtKB"/>
</dbReference>
<dbReference type="GO" id="GO:0016604">
    <property type="term" value="C:nuclear body"/>
    <property type="evidence" value="ECO:0007669"/>
    <property type="project" value="Ensembl"/>
</dbReference>
<dbReference type="GO" id="GO:0005634">
    <property type="term" value="C:nucleus"/>
    <property type="evidence" value="ECO:0000314"/>
    <property type="project" value="UniProtKB"/>
</dbReference>
<dbReference type="GO" id="GO:1990904">
    <property type="term" value="C:ribonucleoprotein complex"/>
    <property type="evidence" value="ECO:0000318"/>
    <property type="project" value="GO_Central"/>
</dbReference>
<dbReference type="GO" id="GO:0097322">
    <property type="term" value="F:7SK snRNA binding"/>
    <property type="evidence" value="ECO:0007669"/>
    <property type="project" value="Ensembl"/>
</dbReference>
<dbReference type="GO" id="GO:0003729">
    <property type="term" value="F:mRNA binding"/>
    <property type="evidence" value="ECO:0000318"/>
    <property type="project" value="GO_Central"/>
</dbReference>
<dbReference type="GO" id="GO:0036002">
    <property type="term" value="F:pre-mRNA binding"/>
    <property type="evidence" value="ECO:0000303"/>
    <property type="project" value="UniProtKB"/>
</dbReference>
<dbReference type="GO" id="GO:0003723">
    <property type="term" value="F:RNA binding"/>
    <property type="evidence" value="ECO:0000315"/>
    <property type="project" value="UniProtKB"/>
</dbReference>
<dbReference type="GO" id="GO:0030317">
    <property type="term" value="P:flagellated sperm motility"/>
    <property type="evidence" value="ECO:0007669"/>
    <property type="project" value="Ensembl"/>
</dbReference>
<dbReference type="GO" id="GO:0140742">
    <property type="term" value="P:lncRNA transcription"/>
    <property type="evidence" value="ECO:0007669"/>
    <property type="project" value="Ensembl"/>
</dbReference>
<dbReference type="GO" id="GO:0006376">
    <property type="term" value="P:mRNA splice site recognition"/>
    <property type="evidence" value="ECO:0000318"/>
    <property type="project" value="GO_Central"/>
</dbReference>
<dbReference type="GO" id="GO:0030575">
    <property type="term" value="P:nuclear body organization"/>
    <property type="evidence" value="ECO:0007669"/>
    <property type="project" value="Ensembl"/>
</dbReference>
<dbReference type="GO" id="GO:0048026">
    <property type="term" value="P:positive regulation of mRNA splicing, via spliceosome"/>
    <property type="evidence" value="ECO:0000314"/>
    <property type="project" value="UniProtKB"/>
</dbReference>
<dbReference type="GO" id="GO:0000381">
    <property type="term" value="P:regulation of alternative mRNA splicing, via spliceosome"/>
    <property type="evidence" value="ECO:0000314"/>
    <property type="project" value="UniProtKB"/>
</dbReference>
<dbReference type="GO" id="GO:0008380">
    <property type="term" value="P:RNA splicing"/>
    <property type="evidence" value="ECO:0000315"/>
    <property type="project" value="UniProtKB"/>
</dbReference>
<dbReference type="GO" id="GO:0007283">
    <property type="term" value="P:spermatogenesis"/>
    <property type="evidence" value="ECO:0007669"/>
    <property type="project" value="Ensembl"/>
</dbReference>
<dbReference type="CDD" id="cd12632">
    <property type="entry name" value="RRM1_CELF3_4_5_6"/>
    <property type="match status" value="1"/>
</dbReference>
<dbReference type="CDD" id="cd12635">
    <property type="entry name" value="RRM2_CELF3_4_5_6"/>
    <property type="match status" value="1"/>
</dbReference>
<dbReference type="CDD" id="cd12639">
    <property type="entry name" value="RRM3_CELF3_4_5_6"/>
    <property type="match status" value="1"/>
</dbReference>
<dbReference type="FunFam" id="3.30.70.330:FF:000007">
    <property type="entry name" value="CUGBP Elav-like family member 4 isoform 3"/>
    <property type="match status" value="1"/>
</dbReference>
<dbReference type="FunFam" id="3.30.70.330:FF:000010">
    <property type="entry name" value="CUGBP Elav-like family member 4 isoform 3"/>
    <property type="match status" value="1"/>
</dbReference>
<dbReference type="FunFam" id="3.30.70.330:FF:000148">
    <property type="entry name" value="Putative CUGBP Elav-like family member 3"/>
    <property type="match status" value="1"/>
</dbReference>
<dbReference type="Gene3D" id="3.30.70.330">
    <property type="match status" value="3"/>
</dbReference>
<dbReference type="InterPro" id="IPR034648">
    <property type="entry name" value="CELF3/4/5/6_RRM1"/>
</dbReference>
<dbReference type="InterPro" id="IPR012677">
    <property type="entry name" value="Nucleotide-bd_a/b_plait_sf"/>
</dbReference>
<dbReference type="InterPro" id="IPR035979">
    <property type="entry name" value="RBD_domain_sf"/>
</dbReference>
<dbReference type="InterPro" id="IPR000504">
    <property type="entry name" value="RRM_dom"/>
</dbReference>
<dbReference type="PANTHER" id="PTHR24012">
    <property type="entry name" value="RNA BINDING PROTEIN"/>
    <property type="match status" value="1"/>
</dbReference>
<dbReference type="Pfam" id="PF00076">
    <property type="entry name" value="RRM_1"/>
    <property type="match status" value="3"/>
</dbReference>
<dbReference type="SMART" id="SM00360">
    <property type="entry name" value="RRM"/>
    <property type="match status" value="3"/>
</dbReference>
<dbReference type="SUPFAM" id="SSF54928">
    <property type="entry name" value="RNA-binding domain, RBD"/>
    <property type="match status" value="2"/>
</dbReference>
<dbReference type="PROSITE" id="PS50102">
    <property type="entry name" value="RRM"/>
    <property type="match status" value="3"/>
</dbReference>
<accession>Q5SZQ8</accession>
<accession>B7ZKK6</accession>
<accession>O15414</accession>
<accession>Q499Y6</accession>
<accession>Q5SZQ7</accession>
<accession>Q6NVK0</accession>
<accession>Q8IZ98</accession>
<accession>Q9BZC2</accession>
<accession>Q9HB30</accession>
<comment type="function">
    <text evidence="4 5">RNA-binding protein involved in the regulation of pre-mRNA alternative splicing. Mediates exon inclusion and/or exclusion in pre-mRNA that are subject to tissue-specific and developmentally regulated alternative splicing. Specifically activates exon 5 inclusion of cardiac isoforms of TNNT2 during heart remodeling at the juvenile to adult transition. Activates the splicing of MAPT/Tau exon 10. Binds to muscle-specific splicing enhancer (MSE) intronic sites flanking the alternative exon 5 of TNNT2 pre-mRNA.</text>
</comment>
<comment type="interaction">
    <interactant intactId="EBI-12258670">
        <id>Q5SZQ8-2</id>
    </interactant>
    <interactant intactId="EBI-743438">
        <id>Q8IV36</id>
        <label>HID1</label>
    </interactant>
    <organismsDiffer>false</organismsDiffer>
    <experiments>3</experiments>
</comment>
<comment type="subcellular location">
    <subcellularLocation>
        <location evidence="1">Nucleus</location>
    </subcellularLocation>
    <subcellularLocation>
        <location evidence="1">Cytoplasm</location>
    </subcellularLocation>
</comment>
<comment type="alternative products">
    <event type="alternative splicing"/>
    <isoform>
        <id>Q5SZQ8-1</id>
        <name>1</name>
        <sequence type="displayed"/>
    </isoform>
    <isoform>
        <id>Q5SZQ8-2</id>
        <name>2</name>
        <sequence type="described" ref="VSP_026825"/>
    </isoform>
    <isoform>
        <id>Q5SZQ8-3</id>
        <name>3</name>
        <sequence type="described" ref="VSP_026824"/>
    </isoform>
    <isoform>
        <id>Q5SZQ8-4</id>
        <name>4</name>
        <sequence type="described" ref="VSP_046642"/>
    </isoform>
</comment>
<comment type="tissue specificity">
    <text evidence="4">Expressed in brain.</text>
</comment>
<comment type="polymorphism">
    <text evidence="8">The poly-Gln tract in AAK07474 may be polymorphic.</text>
</comment>
<comment type="similarity">
    <text evidence="7">Belongs to the CELF/BRUNOL family.</text>
</comment>
<comment type="sequence caution" evidence="7">
    <conflict type="frameshift">
        <sequence resource="EMBL-CDS" id="AAB91444"/>
    </conflict>
</comment>
<protein>
    <recommendedName>
        <fullName>CUGBP Elav-like family member 3</fullName>
        <shortName>CELF-3</shortName>
    </recommendedName>
    <alternativeName>
        <fullName>Bruno-like protein 1</fullName>
    </alternativeName>
    <alternativeName>
        <fullName>CAG repeat protein 4</fullName>
    </alternativeName>
    <alternativeName>
        <fullName>CUG-BP- and ETR-3-like factor 3</fullName>
    </alternativeName>
    <alternativeName>
        <fullName>ELAV-type RNA-binding protein 1</fullName>
        <shortName>ETR-1</shortName>
    </alternativeName>
    <alternativeName>
        <fullName>Expanded repeat domain protein CAG/CTG 4</fullName>
    </alternativeName>
    <alternativeName>
        <fullName>RNA-binding protein BRUNOL-1</fullName>
    </alternativeName>
    <alternativeName>
        <fullName>Trinucleotide repeat-containing gene 4 protein</fullName>
    </alternativeName>
</protein>
<name>CELF3_HUMAN</name>
<sequence>MKEPDAIKLFVGQIPRHLEEKDLKPIFEQFGRIFELTVIKDKYTGLHKGCAFLTYCARDSALKAQSALHEQKTLPGMNRPIQVKPADSESRGEDRKLFVGMLGKQQTDEDVRKMFEPFGTIDECTVLRGPDGTSKGCAFVKFQTHAEAQAAINTLHSSRTLPGASSSLVVKFADTEKERGLRRMQQVATQLGMFSPIALQFGAYSAYTQALMQQQAALVAAHSAYLSPMATMAAVQMQHMAAINANGLIATPITPSSGTSTPPAIAATPVSAIPAALGVNGYSPVPTQPTGQPAPDALYPNGVHPYPAQSPAAPVDPLQQAYAGMQHYTAAYPAAYSLVAPAFPQPPALVAQQPPPPPQQQQQQQQQQQQQQQREGPDGCNIFIYHLPQEFTDSEILQMFVPFGHVISAKVFVDRATNQSKCFGFVSFDNPASAQAAIQAMNGFQIGMKRLKVQLKRPKDANRPY</sequence>
<organism>
    <name type="scientific">Homo sapiens</name>
    <name type="common">Human</name>
    <dbReference type="NCBI Taxonomy" id="9606"/>
    <lineage>
        <taxon>Eukaryota</taxon>
        <taxon>Metazoa</taxon>
        <taxon>Chordata</taxon>
        <taxon>Craniata</taxon>
        <taxon>Vertebrata</taxon>
        <taxon>Euteleostomi</taxon>
        <taxon>Mammalia</taxon>
        <taxon>Eutheria</taxon>
        <taxon>Euarchontoglires</taxon>
        <taxon>Primates</taxon>
        <taxon>Haplorrhini</taxon>
        <taxon>Catarrhini</taxon>
        <taxon>Hominidae</taxon>
        <taxon>Homo</taxon>
    </lineage>
</organism>
<evidence type="ECO:0000250" key="1"/>
<evidence type="ECO:0000255" key="2">
    <source>
        <dbReference type="PROSITE-ProRule" id="PRU00176"/>
    </source>
</evidence>
<evidence type="ECO:0000256" key="3">
    <source>
        <dbReference type="SAM" id="MobiDB-lite"/>
    </source>
</evidence>
<evidence type="ECO:0000269" key="4">
    <source>
    </source>
</evidence>
<evidence type="ECO:0000269" key="5">
    <source>
    </source>
</evidence>
<evidence type="ECO:0000303" key="6">
    <source>
    </source>
</evidence>
<evidence type="ECO:0000305" key="7"/>
<evidence type="ECO:0000305" key="8">
    <source>
    </source>
</evidence>
<evidence type="ECO:0007829" key="9">
    <source>
        <dbReference type="PDB" id="2DNO"/>
    </source>
</evidence>
<feature type="chain" id="PRO_0000295198" description="CUGBP Elav-like family member 3">
    <location>
        <begin position="1"/>
        <end position="465"/>
    </location>
</feature>
<feature type="domain" description="RRM 1" evidence="2">
    <location>
        <begin position="7"/>
        <end position="88"/>
    </location>
</feature>
<feature type="domain" description="RRM 2" evidence="2">
    <location>
        <begin position="95"/>
        <end position="175"/>
    </location>
</feature>
<feature type="domain" description="RRM 3" evidence="2">
    <location>
        <begin position="380"/>
        <end position="458"/>
    </location>
</feature>
<feature type="region of interest" description="Disordered" evidence="3">
    <location>
        <begin position="346"/>
        <end position="379"/>
    </location>
</feature>
<feature type="compositionally biased region" description="Pro residues" evidence="3">
    <location>
        <begin position="346"/>
        <end position="359"/>
    </location>
</feature>
<feature type="compositionally biased region" description="Low complexity" evidence="3">
    <location>
        <begin position="360"/>
        <end position="373"/>
    </location>
</feature>
<feature type="splice variant" id="VSP_026824" description="In isoform 3." evidence="6">
    <location>
        <position position="93"/>
    </location>
</feature>
<feature type="splice variant" id="VSP_046642" description="In isoform 4." evidence="7">
    <location>
        <begin position="258"/>
        <end position="307"/>
    </location>
</feature>
<feature type="splice variant" id="VSP_026825" description="In isoform 2." evidence="6">
    <location>
        <position position="330"/>
    </location>
</feature>
<feature type="sequence conflict" description="In Ref. 5; AAH52491." evidence="7" ref="5">
    <original>Q</original>
    <variation>K</variation>
    <location>
        <position position="149"/>
    </location>
</feature>
<feature type="sequence conflict" description="In Ref. 5; AAH52491." evidence="7" ref="5">
    <original>A</original>
    <variation>T</variation>
    <location>
        <position position="198"/>
    </location>
</feature>
<feature type="sequence conflict" description="In Ref. 5; AAH52491." evidence="7" ref="5">
    <original>P</original>
    <variation>Q</variation>
    <location>
        <position position="284"/>
    </location>
</feature>
<feature type="sequence conflict" description="In Ref. 1; AAK07474 and 2; AAN73884." evidence="7" ref="1 2">
    <original>A</original>
    <variation>V</variation>
    <location>
        <position position="312"/>
    </location>
</feature>
<feature type="strand" evidence="9">
    <location>
        <begin position="97"/>
        <end position="101"/>
    </location>
</feature>
<feature type="helix" evidence="9">
    <location>
        <begin position="108"/>
        <end position="115"/>
    </location>
</feature>
<feature type="helix" evidence="9">
    <location>
        <begin position="116"/>
        <end position="118"/>
    </location>
</feature>
<feature type="strand" evidence="9">
    <location>
        <begin position="121"/>
        <end position="128"/>
    </location>
</feature>
<feature type="strand" evidence="9">
    <location>
        <begin position="134"/>
        <end position="144"/>
    </location>
</feature>
<feature type="helix" evidence="9">
    <location>
        <begin position="145"/>
        <end position="155"/>
    </location>
</feature>
<feature type="strand" evidence="9">
    <location>
        <begin position="165"/>
        <end position="167"/>
    </location>
</feature>
<feature type="strand" evidence="9">
    <location>
        <begin position="170"/>
        <end position="172"/>
    </location>
</feature>
<keyword id="KW-0002">3D-structure</keyword>
<keyword id="KW-0010">Activator</keyword>
<keyword id="KW-0025">Alternative splicing</keyword>
<keyword id="KW-0963">Cytoplasm</keyword>
<keyword id="KW-0507">mRNA processing</keyword>
<keyword id="KW-0508">mRNA splicing</keyword>
<keyword id="KW-0539">Nucleus</keyword>
<keyword id="KW-1267">Proteomics identification</keyword>
<keyword id="KW-1185">Reference proteome</keyword>
<keyword id="KW-0677">Repeat</keyword>
<keyword id="KW-0694">RNA-binding</keyword>
<gene>
    <name type="primary">CELF3</name>
    <name type="synonym">BRUNOL1</name>
    <name type="synonym">CAGH4</name>
    <name type="synonym">ERDA4</name>
    <name type="synonym">TNRC4</name>
</gene>